<accession>B2FTB9</accession>
<proteinExistence type="inferred from homology"/>
<protein>
    <recommendedName>
        <fullName evidence="1">Formate-dependent phosphoribosylglycinamide formyltransferase</fullName>
        <ecNumber evidence="1">6.3.1.21</ecNumber>
    </recommendedName>
    <alternativeName>
        <fullName evidence="1">5'-phosphoribosylglycinamide transformylase 2</fullName>
    </alternativeName>
    <alternativeName>
        <fullName evidence="1">Formate-dependent GAR transformylase</fullName>
    </alternativeName>
    <alternativeName>
        <fullName evidence="1">GAR transformylase 2</fullName>
        <shortName evidence="1">GART 2</shortName>
    </alternativeName>
    <alternativeName>
        <fullName evidence="1">Non-folate glycinamide ribonucleotide transformylase</fullName>
    </alternativeName>
    <alternativeName>
        <fullName evidence="1">Phosphoribosylglycinamide formyltransferase 2</fullName>
    </alternativeName>
</protein>
<dbReference type="EC" id="6.3.1.21" evidence="1"/>
<dbReference type="EMBL" id="AM743169">
    <property type="protein sequence ID" value="CAQ44816.1"/>
    <property type="molecule type" value="Genomic_DNA"/>
</dbReference>
<dbReference type="RefSeq" id="WP_012479445.1">
    <property type="nucleotide sequence ID" value="NC_010943.1"/>
</dbReference>
<dbReference type="SMR" id="B2FTB9"/>
<dbReference type="EnsemblBacteria" id="CAQ44816">
    <property type="protein sequence ID" value="CAQ44816"/>
    <property type="gene ID" value="Smlt1264"/>
</dbReference>
<dbReference type="KEGG" id="sml:Smlt1264"/>
<dbReference type="PATRIC" id="fig|522373.3.peg.1225"/>
<dbReference type="eggNOG" id="COG0027">
    <property type="taxonomic scope" value="Bacteria"/>
</dbReference>
<dbReference type="HOGENOM" id="CLU_011534_1_3_6"/>
<dbReference type="UniPathway" id="UPA00074">
    <property type="reaction ID" value="UER00127"/>
</dbReference>
<dbReference type="Proteomes" id="UP000008840">
    <property type="component" value="Chromosome"/>
</dbReference>
<dbReference type="GO" id="GO:0005829">
    <property type="term" value="C:cytosol"/>
    <property type="evidence" value="ECO:0007669"/>
    <property type="project" value="TreeGrafter"/>
</dbReference>
<dbReference type="GO" id="GO:0005524">
    <property type="term" value="F:ATP binding"/>
    <property type="evidence" value="ECO:0007669"/>
    <property type="project" value="UniProtKB-UniRule"/>
</dbReference>
<dbReference type="GO" id="GO:0000287">
    <property type="term" value="F:magnesium ion binding"/>
    <property type="evidence" value="ECO:0007669"/>
    <property type="project" value="InterPro"/>
</dbReference>
<dbReference type="GO" id="GO:0043815">
    <property type="term" value="F:phosphoribosylglycinamide formyltransferase 2 activity"/>
    <property type="evidence" value="ECO:0007669"/>
    <property type="project" value="UniProtKB-UniRule"/>
</dbReference>
<dbReference type="GO" id="GO:0004644">
    <property type="term" value="F:phosphoribosylglycinamide formyltransferase activity"/>
    <property type="evidence" value="ECO:0007669"/>
    <property type="project" value="InterPro"/>
</dbReference>
<dbReference type="GO" id="GO:0006189">
    <property type="term" value="P:'de novo' IMP biosynthetic process"/>
    <property type="evidence" value="ECO:0007669"/>
    <property type="project" value="UniProtKB-UniRule"/>
</dbReference>
<dbReference type="FunFam" id="3.30.1490.20:FF:000013">
    <property type="entry name" value="Formate-dependent phosphoribosylglycinamide formyltransferase"/>
    <property type="match status" value="1"/>
</dbReference>
<dbReference type="FunFam" id="3.30.470.20:FF:000027">
    <property type="entry name" value="Formate-dependent phosphoribosylglycinamide formyltransferase"/>
    <property type="match status" value="1"/>
</dbReference>
<dbReference type="FunFam" id="3.40.50.20:FF:000007">
    <property type="entry name" value="Formate-dependent phosphoribosylglycinamide formyltransferase"/>
    <property type="match status" value="1"/>
</dbReference>
<dbReference type="Gene3D" id="3.40.50.20">
    <property type="match status" value="1"/>
</dbReference>
<dbReference type="Gene3D" id="3.30.1490.20">
    <property type="entry name" value="ATP-grasp fold, A domain"/>
    <property type="match status" value="1"/>
</dbReference>
<dbReference type="Gene3D" id="3.30.470.20">
    <property type="entry name" value="ATP-grasp fold, B domain"/>
    <property type="match status" value="1"/>
</dbReference>
<dbReference type="HAMAP" id="MF_01643">
    <property type="entry name" value="PurT"/>
    <property type="match status" value="1"/>
</dbReference>
<dbReference type="InterPro" id="IPR011761">
    <property type="entry name" value="ATP-grasp"/>
</dbReference>
<dbReference type="InterPro" id="IPR003135">
    <property type="entry name" value="ATP-grasp_carboxylate-amine"/>
</dbReference>
<dbReference type="InterPro" id="IPR013815">
    <property type="entry name" value="ATP_grasp_subdomain_1"/>
</dbReference>
<dbReference type="InterPro" id="IPR016185">
    <property type="entry name" value="PreATP-grasp_dom_sf"/>
</dbReference>
<dbReference type="InterPro" id="IPR005862">
    <property type="entry name" value="PurT"/>
</dbReference>
<dbReference type="InterPro" id="IPR054350">
    <property type="entry name" value="PurT/PurK_preATP-grasp"/>
</dbReference>
<dbReference type="InterPro" id="IPR048740">
    <property type="entry name" value="PurT_C"/>
</dbReference>
<dbReference type="InterPro" id="IPR011054">
    <property type="entry name" value="Rudment_hybrid_motif"/>
</dbReference>
<dbReference type="NCBIfam" id="NF006766">
    <property type="entry name" value="PRK09288.1"/>
    <property type="match status" value="1"/>
</dbReference>
<dbReference type="NCBIfam" id="TIGR01142">
    <property type="entry name" value="purT"/>
    <property type="match status" value="1"/>
</dbReference>
<dbReference type="PANTHER" id="PTHR43055">
    <property type="entry name" value="FORMATE-DEPENDENT PHOSPHORIBOSYLGLYCINAMIDE FORMYLTRANSFERASE"/>
    <property type="match status" value="1"/>
</dbReference>
<dbReference type="PANTHER" id="PTHR43055:SF1">
    <property type="entry name" value="FORMATE-DEPENDENT PHOSPHORIBOSYLGLYCINAMIDE FORMYLTRANSFERASE"/>
    <property type="match status" value="1"/>
</dbReference>
<dbReference type="Pfam" id="PF02222">
    <property type="entry name" value="ATP-grasp"/>
    <property type="match status" value="1"/>
</dbReference>
<dbReference type="Pfam" id="PF21244">
    <property type="entry name" value="PurT_C"/>
    <property type="match status" value="1"/>
</dbReference>
<dbReference type="Pfam" id="PF22660">
    <property type="entry name" value="RS_preATP-grasp-like"/>
    <property type="match status" value="1"/>
</dbReference>
<dbReference type="SUPFAM" id="SSF56059">
    <property type="entry name" value="Glutathione synthetase ATP-binding domain-like"/>
    <property type="match status" value="1"/>
</dbReference>
<dbReference type="SUPFAM" id="SSF52440">
    <property type="entry name" value="PreATP-grasp domain"/>
    <property type="match status" value="1"/>
</dbReference>
<dbReference type="SUPFAM" id="SSF51246">
    <property type="entry name" value="Rudiment single hybrid motif"/>
    <property type="match status" value="1"/>
</dbReference>
<dbReference type="PROSITE" id="PS50975">
    <property type="entry name" value="ATP_GRASP"/>
    <property type="match status" value="1"/>
</dbReference>
<organism>
    <name type="scientific">Stenotrophomonas maltophilia (strain K279a)</name>
    <dbReference type="NCBI Taxonomy" id="522373"/>
    <lineage>
        <taxon>Bacteria</taxon>
        <taxon>Pseudomonadati</taxon>
        <taxon>Pseudomonadota</taxon>
        <taxon>Gammaproteobacteria</taxon>
        <taxon>Lysobacterales</taxon>
        <taxon>Lysobacteraceae</taxon>
        <taxon>Stenotrophomonas</taxon>
        <taxon>Stenotrophomonas maltophilia group</taxon>
    </lineage>
</organism>
<name>PURT_STRMK</name>
<keyword id="KW-0067">ATP-binding</keyword>
<keyword id="KW-0436">Ligase</keyword>
<keyword id="KW-0460">Magnesium</keyword>
<keyword id="KW-0479">Metal-binding</keyword>
<keyword id="KW-0547">Nucleotide-binding</keyword>
<keyword id="KW-0658">Purine biosynthesis</keyword>
<keyword id="KW-1185">Reference proteome</keyword>
<reference key="1">
    <citation type="journal article" date="2008" name="Genome Biol.">
        <title>The complete genome, comparative and functional analysis of Stenotrophomonas maltophilia reveals an organism heavily shielded by drug resistance determinants.</title>
        <authorList>
            <person name="Crossman L.C."/>
            <person name="Gould V.C."/>
            <person name="Dow J.M."/>
            <person name="Vernikos G.S."/>
            <person name="Okazaki A."/>
            <person name="Sebaihia M."/>
            <person name="Saunders D."/>
            <person name="Arrowsmith C."/>
            <person name="Carver T."/>
            <person name="Peters N."/>
            <person name="Adlem E."/>
            <person name="Kerhornou A."/>
            <person name="Lord A."/>
            <person name="Murphy L."/>
            <person name="Seeger K."/>
            <person name="Squares R."/>
            <person name="Rutter S."/>
            <person name="Quail M.A."/>
            <person name="Rajandream M.A."/>
            <person name="Harris D."/>
            <person name="Churcher C."/>
            <person name="Bentley S.D."/>
            <person name="Parkhill J."/>
            <person name="Thomson N.R."/>
            <person name="Avison M.B."/>
        </authorList>
    </citation>
    <scope>NUCLEOTIDE SEQUENCE [LARGE SCALE GENOMIC DNA]</scope>
    <source>
        <strain>K279a</strain>
    </source>
</reference>
<sequence length="395" mass="42333">MAKLGTPLSPSATRVLLLGSGELGKEVAIELQRLGVEVIAADRYADAPAMQVAHRSHVIDMLDAMALRALIAQEQPHLVVPEIEAIHTETLVQLEQEQGLRVIPTARAARLTMDREGIRRLAAETLGLPTSPYRFVDTEAEYRAAVAAIGLPCVVKPVMSSSGKGQSTLRSEAEIAPAWEYAQTGGRAGAGRCIVEGFIDFDYEITLLTVRHAGGTSFCAPIGHLQKDGDYRESWQPQPMSSAALARAEEISRAITDDLGGWGLFGVELFVKGDEVWFSEVSPRPHDTGLVTLVSQELSEFALHARAILGLPIPVIRQSGPSASCALLAHGEGVPYFNNVAAALQVPDTAVRLFGKPSVHGHRRVGVTLARAETIDEARAIARDAAEAIGVELRP</sequence>
<evidence type="ECO:0000255" key="1">
    <source>
        <dbReference type="HAMAP-Rule" id="MF_01643"/>
    </source>
</evidence>
<comment type="function">
    <text evidence="1">Involved in the de novo purine biosynthesis. Catalyzes the transfer of formate to 5-phospho-ribosyl-glycinamide (GAR), producing 5-phospho-ribosyl-N-formylglycinamide (FGAR). Formate is provided by PurU via hydrolysis of 10-formyl-tetrahydrofolate.</text>
</comment>
<comment type="catalytic activity">
    <reaction evidence="1">
        <text>N(1)-(5-phospho-beta-D-ribosyl)glycinamide + formate + ATP = N(2)-formyl-N(1)-(5-phospho-beta-D-ribosyl)glycinamide + ADP + phosphate + H(+)</text>
        <dbReference type="Rhea" id="RHEA:24829"/>
        <dbReference type="ChEBI" id="CHEBI:15378"/>
        <dbReference type="ChEBI" id="CHEBI:15740"/>
        <dbReference type="ChEBI" id="CHEBI:30616"/>
        <dbReference type="ChEBI" id="CHEBI:43474"/>
        <dbReference type="ChEBI" id="CHEBI:143788"/>
        <dbReference type="ChEBI" id="CHEBI:147286"/>
        <dbReference type="ChEBI" id="CHEBI:456216"/>
        <dbReference type="EC" id="6.3.1.21"/>
    </reaction>
    <physiologicalReaction direction="left-to-right" evidence="1">
        <dbReference type="Rhea" id="RHEA:24830"/>
    </physiologicalReaction>
</comment>
<comment type="pathway">
    <text evidence="1">Purine metabolism; IMP biosynthesis via de novo pathway; N(2)-formyl-N(1)-(5-phospho-D-ribosyl)glycinamide from N(1)-(5-phospho-D-ribosyl)glycinamide (formate route): step 1/1.</text>
</comment>
<comment type="subunit">
    <text evidence="1">Homodimer.</text>
</comment>
<comment type="similarity">
    <text evidence="1">Belongs to the PurK/PurT family.</text>
</comment>
<gene>
    <name evidence="1" type="primary">purT</name>
    <name type="ordered locus">Smlt1264</name>
</gene>
<feature type="chain" id="PRO_1000186899" description="Formate-dependent phosphoribosylglycinamide formyltransferase">
    <location>
        <begin position="1"/>
        <end position="395"/>
    </location>
</feature>
<feature type="domain" description="ATP-grasp" evidence="1">
    <location>
        <begin position="120"/>
        <end position="309"/>
    </location>
</feature>
<feature type="binding site" evidence="1">
    <location>
        <begin position="22"/>
        <end position="23"/>
    </location>
    <ligand>
        <name>N(1)-(5-phospho-beta-D-ribosyl)glycinamide</name>
        <dbReference type="ChEBI" id="CHEBI:143788"/>
    </ligand>
</feature>
<feature type="binding site" evidence="1">
    <location>
        <position position="82"/>
    </location>
    <ligand>
        <name>N(1)-(5-phospho-beta-D-ribosyl)glycinamide</name>
        <dbReference type="ChEBI" id="CHEBI:143788"/>
    </ligand>
</feature>
<feature type="binding site" evidence="1">
    <location>
        <position position="115"/>
    </location>
    <ligand>
        <name>ATP</name>
        <dbReference type="ChEBI" id="CHEBI:30616"/>
    </ligand>
</feature>
<feature type="binding site" evidence="1">
    <location>
        <position position="156"/>
    </location>
    <ligand>
        <name>ATP</name>
        <dbReference type="ChEBI" id="CHEBI:30616"/>
    </ligand>
</feature>
<feature type="binding site" evidence="1">
    <location>
        <begin position="161"/>
        <end position="166"/>
    </location>
    <ligand>
        <name>ATP</name>
        <dbReference type="ChEBI" id="CHEBI:30616"/>
    </ligand>
</feature>
<feature type="binding site" evidence="1">
    <location>
        <begin position="196"/>
        <end position="199"/>
    </location>
    <ligand>
        <name>ATP</name>
        <dbReference type="ChEBI" id="CHEBI:30616"/>
    </ligand>
</feature>
<feature type="binding site" evidence="1">
    <location>
        <position position="204"/>
    </location>
    <ligand>
        <name>ATP</name>
        <dbReference type="ChEBI" id="CHEBI:30616"/>
    </ligand>
</feature>
<feature type="binding site" evidence="1">
    <location>
        <position position="268"/>
    </location>
    <ligand>
        <name>Mg(2+)</name>
        <dbReference type="ChEBI" id="CHEBI:18420"/>
    </ligand>
</feature>
<feature type="binding site" evidence="1">
    <location>
        <position position="280"/>
    </location>
    <ligand>
        <name>Mg(2+)</name>
        <dbReference type="ChEBI" id="CHEBI:18420"/>
    </ligand>
</feature>
<feature type="binding site" evidence="1">
    <location>
        <position position="287"/>
    </location>
    <ligand>
        <name>N(1)-(5-phospho-beta-D-ribosyl)glycinamide</name>
        <dbReference type="ChEBI" id="CHEBI:143788"/>
    </ligand>
</feature>
<feature type="binding site" evidence="1">
    <location>
        <position position="356"/>
    </location>
    <ligand>
        <name>N(1)-(5-phospho-beta-D-ribosyl)glycinamide</name>
        <dbReference type="ChEBI" id="CHEBI:143788"/>
    </ligand>
</feature>
<feature type="binding site" evidence="1">
    <location>
        <begin position="363"/>
        <end position="364"/>
    </location>
    <ligand>
        <name>N(1)-(5-phospho-beta-D-ribosyl)glycinamide</name>
        <dbReference type="ChEBI" id="CHEBI:143788"/>
    </ligand>
</feature>